<dbReference type="EMBL" id="BX537968">
    <property type="protein sequence ID" value="CAD97932.1"/>
    <property type="status" value="ALT_INIT"/>
    <property type="molecule type" value="mRNA"/>
</dbReference>
<dbReference type="EMBL" id="AC008393">
    <property type="status" value="NOT_ANNOTATED_CDS"/>
    <property type="molecule type" value="Genomic_DNA"/>
</dbReference>
<dbReference type="EMBL" id="BC002739">
    <property type="protein sequence ID" value="AAH02739.2"/>
    <property type="molecule type" value="mRNA"/>
</dbReference>
<dbReference type="EMBL" id="BC050714">
    <property type="status" value="NOT_ANNOTATED_CDS"/>
    <property type="molecule type" value="mRNA"/>
</dbReference>
<dbReference type="EMBL" id="BC069051">
    <property type="protein sequence ID" value="AAH69051.1"/>
    <property type="molecule type" value="mRNA"/>
</dbReference>
<dbReference type="EMBL" id="AF153685">
    <property type="protein sequence ID" value="AAD51611.1"/>
    <property type="status" value="ALT_FRAME"/>
    <property type="molecule type" value="mRNA"/>
</dbReference>
<dbReference type="CCDS" id="CCDS34318.1">
    <molecule id="Q6NTE8-3"/>
</dbReference>
<dbReference type="CCDS" id="CCDS34319.1">
    <molecule id="Q6NTE8-1"/>
</dbReference>
<dbReference type="RefSeq" id="NP_001017987.1">
    <molecule id="Q6NTE8-3"/>
    <property type="nucleotide sequence ID" value="NM_001017987.3"/>
</dbReference>
<dbReference type="RefSeq" id="NP_057259.2">
    <molecule id="Q6NTE8-1"/>
    <property type="nucleotide sequence ID" value="NM_016175.4"/>
</dbReference>
<dbReference type="BioGRID" id="119333">
    <property type="interactions" value="39"/>
</dbReference>
<dbReference type="CORUM" id="Q6NTE8"/>
<dbReference type="FunCoup" id="Q6NTE8">
    <property type="interactions" value="1183"/>
</dbReference>
<dbReference type="IntAct" id="Q6NTE8">
    <property type="interactions" value="14"/>
</dbReference>
<dbReference type="MINT" id="Q6NTE8"/>
<dbReference type="STRING" id="9606.ENSP00000292586"/>
<dbReference type="iPTMnet" id="Q6NTE8"/>
<dbReference type="PhosphoSitePlus" id="Q6NTE8"/>
<dbReference type="BioMuta" id="MRNIP"/>
<dbReference type="DMDM" id="215273989"/>
<dbReference type="jPOST" id="Q6NTE8"/>
<dbReference type="MassIVE" id="Q6NTE8"/>
<dbReference type="PaxDb" id="9606-ENSP00000292586"/>
<dbReference type="PeptideAtlas" id="Q6NTE8"/>
<dbReference type="ProteomicsDB" id="19034"/>
<dbReference type="ProteomicsDB" id="66668">
    <molecule id="Q6NTE8-1"/>
</dbReference>
<dbReference type="ProteomicsDB" id="66669">
    <molecule id="Q6NTE8-2"/>
</dbReference>
<dbReference type="Pumba" id="Q6NTE8"/>
<dbReference type="Antibodypedia" id="62814">
    <property type="antibodies" value="104 antibodies from 12 providers"/>
</dbReference>
<dbReference type="DNASU" id="51149"/>
<dbReference type="Ensembl" id="ENST00000292586.11">
    <molecule id="Q6NTE8-1"/>
    <property type="protein sequence ID" value="ENSP00000292586.6"/>
    <property type="gene ID" value="ENSG00000161010.16"/>
</dbReference>
<dbReference type="Ensembl" id="ENST00000376931.6">
    <molecule id="Q6NTE8-3"/>
    <property type="protein sequence ID" value="ENSP00000366130.2"/>
    <property type="gene ID" value="ENSG00000161010.16"/>
</dbReference>
<dbReference type="Ensembl" id="ENST00000639632.2">
    <molecule id="Q6NTE8-1"/>
    <property type="protein sequence ID" value="ENSP00000491991.1"/>
    <property type="gene ID" value="ENSG00000283918.2"/>
</dbReference>
<dbReference type="Ensembl" id="ENST00000640658.1">
    <molecule id="Q6NTE8-3"/>
    <property type="protein sequence ID" value="ENSP00000491128.1"/>
    <property type="gene ID" value="ENSG00000283918.2"/>
</dbReference>
<dbReference type="GeneID" id="51149"/>
<dbReference type="KEGG" id="hsa:51149"/>
<dbReference type="MANE-Select" id="ENST00000292586.11">
    <property type="protein sequence ID" value="ENSP00000292586.6"/>
    <property type="RefSeq nucleotide sequence ID" value="NM_016175.4"/>
    <property type="RefSeq protein sequence ID" value="NP_057259.2"/>
</dbReference>
<dbReference type="UCSC" id="uc003mla.4">
    <molecule id="Q6NTE8-1"/>
    <property type="organism name" value="human"/>
</dbReference>
<dbReference type="AGR" id="HGNC:30817"/>
<dbReference type="CTD" id="51149"/>
<dbReference type="DisGeNET" id="51149"/>
<dbReference type="GeneCards" id="MRNIP"/>
<dbReference type="HGNC" id="HGNC:30817">
    <property type="gene designation" value="MRNIP"/>
</dbReference>
<dbReference type="HPA" id="ENSG00000161010">
    <property type="expression patterns" value="Low tissue specificity"/>
</dbReference>
<dbReference type="MIM" id="617154">
    <property type="type" value="gene"/>
</dbReference>
<dbReference type="neXtProt" id="NX_Q6NTE8"/>
<dbReference type="OpenTargets" id="ENSG00000161010"/>
<dbReference type="PharmGKB" id="PA162380286"/>
<dbReference type="VEuPathDB" id="HostDB:ENSG00000161010"/>
<dbReference type="eggNOG" id="ENOG502S8YD">
    <property type="taxonomic scope" value="Eukaryota"/>
</dbReference>
<dbReference type="GeneTree" id="ENSGT00390000006124"/>
<dbReference type="HOGENOM" id="CLU_068693_0_0_1"/>
<dbReference type="InParanoid" id="Q6NTE8"/>
<dbReference type="OMA" id="GHQQAEN"/>
<dbReference type="OrthoDB" id="5960226at2759"/>
<dbReference type="PAN-GO" id="Q6NTE8">
    <property type="GO annotations" value="3 GO annotations based on evolutionary models"/>
</dbReference>
<dbReference type="PhylomeDB" id="Q6NTE8"/>
<dbReference type="TreeFam" id="TF333430"/>
<dbReference type="PathwayCommons" id="Q6NTE8"/>
<dbReference type="SignaLink" id="Q6NTE8"/>
<dbReference type="BioGRID-ORCS" id="51149">
    <property type="hits" value="12 hits in 1128 CRISPR screens"/>
</dbReference>
<dbReference type="ChiTaRS" id="C5orf45">
    <property type="organism name" value="human"/>
</dbReference>
<dbReference type="GenomeRNAi" id="51149"/>
<dbReference type="Pharos" id="Q6NTE8">
    <property type="development level" value="Tbio"/>
</dbReference>
<dbReference type="PRO" id="PR:Q6NTE8"/>
<dbReference type="Proteomes" id="UP000005640">
    <property type="component" value="Chromosome 5"/>
</dbReference>
<dbReference type="RNAct" id="Q6NTE8">
    <property type="molecule type" value="protein"/>
</dbReference>
<dbReference type="Bgee" id="ENSG00000161010">
    <property type="expression patterns" value="Expressed in cerebellar hemisphere and 107 other cell types or tissues"/>
</dbReference>
<dbReference type="ExpressionAtlas" id="Q6NTE8">
    <property type="expression patterns" value="baseline and differential"/>
</dbReference>
<dbReference type="GO" id="GO:0005654">
    <property type="term" value="C:nucleoplasm"/>
    <property type="evidence" value="ECO:0000314"/>
    <property type="project" value="UniProtKB"/>
</dbReference>
<dbReference type="GO" id="GO:0005634">
    <property type="term" value="C:nucleus"/>
    <property type="evidence" value="ECO:0000314"/>
    <property type="project" value="UniProtKB"/>
</dbReference>
<dbReference type="GO" id="GO:0003682">
    <property type="term" value="F:chromatin binding"/>
    <property type="evidence" value="ECO:0000314"/>
    <property type="project" value="UniProtKB"/>
</dbReference>
<dbReference type="GO" id="GO:0006974">
    <property type="term" value="P:DNA damage response"/>
    <property type="evidence" value="ECO:0000315"/>
    <property type="project" value="UniProtKB"/>
</dbReference>
<dbReference type="GO" id="GO:0006281">
    <property type="term" value="P:DNA repair"/>
    <property type="evidence" value="ECO:0007669"/>
    <property type="project" value="UniProtKB-KW"/>
</dbReference>
<dbReference type="GO" id="GO:0007095">
    <property type="term" value="P:mitotic G2 DNA damage checkpoint signaling"/>
    <property type="evidence" value="ECO:0000315"/>
    <property type="project" value="UniProtKB"/>
</dbReference>
<dbReference type="GO" id="GO:1905168">
    <property type="term" value="P:positive regulation of double-strand break repair via homologous recombination"/>
    <property type="evidence" value="ECO:0000315"/>
    <property type="project" value="UniProtKB"/>
</dbReference>
<dbReference type="GO" id="GO:0045860">
    <property type="term" value="P:positive regulation of protein kinase activity"/>
    <property type="evidence" value="ECO:0000315"/>
    <property type="project" value="UniProtKB"/>
</dbReference>
<dbReference type="GO" id="GO:0071168">
    <property type="term" value="P:protein localization to chromatin"/>
    <property type="evidence" value="ECO:0000314"/>
    <property type="project" value="UniProtKB"/>
</dbReference>
<dbReference type="GO" id="GO:2001032">
    <property type="term" value="P:regulation of double-strand break repair via nonhomologous end joining"/>
    <property type="evidence" value="ECO:0000315"/>
    <property type="project" value="UniProtKB"/>
</dbReference>
<dbReference type="GO" id="GO:0010212">
    <property type="term" value="P:response to ionizing radiation"/>
    <property type="evidence" value="ECO:0000315"/>
    <property type="project" value="UniProtKB"/>
</dbReference>
<dbReference type="InterPro" id="IPR032739">
    <property type="entry name" value="MRNIP"/>
</dbReference>
<dbReference type="InterPro" id="IPR049472">
    <property type="entry name" value="MRNIP_N"/>
</dbReference>
<dbReference type="PANTHER" id="PTHR15863">
    <property type="entry name" value="MRN COMPLEX-INTERACTING PROTEIN"/>
    <property type="match status" value="1"/>
</dbReference>
<dbReference type="PANTHER" id="PTHR15863:SF2">
    <property type="entry name" value="MRN COMPLEX-INTERACTING PROTEIN"/>
    <property type="match status" value="1"/>
</dbReference>
<dbReference type="Pfam" id="PF15749">
    <property type="entry name" value="MRNIP"/>
    <property type="match status" value="1"/>
</dbReference>
<gene>
    <name evidence="9" type="primary">MRNIP</name>
    <name type="synonym">C5orf45</name>
</gene>
<protein>
    <recommendedName>
        <fullName evidence="9">MRN complex-interacting protein</fullName>
    </recommendedName>
    <alternativeName>
        <fullName evidence="7">MRN-interacting protein</fullName>
    </alternativeName>
</protein>
<reference key="1">
    <citation type="journal article" date="2007" name="BMC Genomics">
        <title>The full-ORF clone resource of the German cDNA consortium.</title>
        <authorList>
            <person name="Bechtel S."/>
            <person name="Rosenfelder H."/>
            <person name="Duda A."/>
            <person name="Schmidt C.P."/>
            <person name="Ernst U."/>
            <person name="Wellenreuther R."/>
            <person name="Mehrle A."/>
            <person name="Schuster C."/>
            <person name="Bahr A."/>
            <person name="Bloecker H."/>
            <person name="Heubner D."/>
            <person name="Hoerlein A."/>
            <person name="Michel G."/>
            <person name="Wedler H."/>
            <person name="Koehrer K."/>
            <person name="Ottenwaelder B."/>
            <person name="Poustka A."/>
            <person name="Wiemann S."/>
            <person name="Schupp I."/>
        </authorList>
    </citation>
    <scope>NUCLEOTIDE SEQUENCE [LARGE SCALE MRNA] (ISOFORM 2)</scope>
    <source>
        <tissue>Endometrium</tissue>
    </source>
</reference>
<reference key="2">
    <citation type="journal article" date="2004" name="Nature">
        <title>The DNA sequence and comparative analysis of human chromosome 5.</title>
        <authorList>
            <person name="Schmutz J."/>
            <person name="Martin J."/>
            <person name="Terry A."/>
            <person name="Couronne O."/>
            <person name="Grimwood J."/>
            <person name="Lowry S."/>
            <person name="Gordon L.A."/>
            <person name="Scott D."/>
            <person name="Xie G."/>
            <person name="Huang W."/>
            <person name="Hellsten U."/>
            <person name="Tran-Gyamfi M."/>
            <person name="She X."/>
            <person name="Prabhakar S."/>
            <person name="Aerts A."/>
            <person name="Altherr M."/>
            <person name="Bajorek E."/>
            <person name="Black S."/>
            <person name="Branscomb E."/>
            <person name="Caoile C."/>
            <person name="Challacombe J.F."/>
            <person name="Chan Y.M."/>
            <person name="Denys M."/>
            <person name="Detter J.C."/>
            <person name="Escobar J."/>
            <person name="Flowers D."/>
            <person name="Fotopulos D."/>
            <person name="Glavina T."/>
            <person name="Gomez M."/>
            <person name="Gonzales E."/>
            <person name="Goodstein D."/>
            <person name="Grigoriev I."/>
            <person name="Groza M."/>
            <person name="Hammon N."/>
            <person name="Hawkins T."/>
            <person name="Haydu L."/>
            <person name="Israni S."/>
            <person name="Jett J."/>
            <person name="Kadner K."/>
            <person name="Kimball H."/>
            <person name="Kobayashi A."/>
            <person name="Lopez F."/>
            <person name="Lou Y."/>
            <person name="Martinez D."/>
            <person name="Medina C."/>
            <person name="Morgan J."/>
            <person name="Nandkeshwar R."/>
            <person name="Noonan J.P."/>
            <person name="Pitluck S."/>
            <person name="Pollard M."/>
            <person name="Predki P."/>
            <person name="Priest J."/>
            <person name="Ramirez L."/>
            <person name="Retterer J."/>
            <person name="Rodriguez A."/>
            <person name="Rogers S."/>
            <person name="Salamov A."/>
            <person name="Salazar A."/>
            <person name="Thayer N."/>
            <person name="Tice H."/>
            <person name="Tsai M."/>
            <person name="Ustaszewska A."/>
            <person name="Vo N."/>
            <person name="Wheeler J."/>
            <person name="Wu K."/>
            <person name="Yang J."/>
            <person name="Dickson M."/>
            <person name="Cheng J.-F."/>
            <person name="Eichler E.E."/>
            <person name="Olsen A."/>
            <person name="Pennacchio L.A."/>
            <person name="Rokhsar D.S."/>
            <person name="Richardson P."/>
            <person name="Lucas S.M."/>
            <person name="Myers R.M."/>
            <person name="Rubin E.M."/>
        </authorList>
    </citation>
    <scope>NUCLEOTIDE SEQUENCE [LARGE SCALE GENOMIC DNA]</scope>
</reference>
<reference key="3">
    <citation type="journal article" date="2004" name="Genome Res.">
        <title>The status, quality, and expansion of the NIH full-length cDNA project: the Mammalian Gene Collection (MGC).</title>
        <authorList>
            <consortium name="The MGC Project Team"/>
        </authorList>
    </citation>
    <scope>NUCLEOTIDE SEQUENCE [LARGE SCALE MRNA] (ISOFORM 1)</scope>
    <scope>NUCLEOTIDE SEQUENCE [LARGE SCALE MRNA] OF 3-343 (ISOFORM 3)</scope>
    <scope>VARIANTS GLY-154 AND ARG-231</scope>
    <source>
        <tissue>Lung</tissue>
        <tissue>Uterus</tissue>
    </source>
</reference>
<reference key="4">
    <citation type="submission" date="1999-05" db="EMBL/GenBank/DDBJ databases">
        <authorList>
            <person name="Zhang W."/>
            <person name="Yuan Z."/>
            <person name="Wan T."/>
            <person name="Cao X."/>
        </authorList>
    </citation>
    <scope>NUCLEOTIDE SEQUENCE [LARGE SCALE MRNA] OF 113-343 (ISOFORM 1)</scope>
    <scope>VARIANT ARG-231</scope>
</reference>
<reference key="5">
    <citation type="journal article" date="2016" name="Cell Rep.">
        <title>MRNIP/C5orf45 interacts with the MRN complex and contributes to the DNA damage response.</title>
        <authorList>
            <person name="Staples C.J."/>
            <person name="Barone G."/>
            <person name="Myers K.N."/>
            <person name="Ganesh A."/>
            <person name="Gibbs-Seymour I."/>
            <person name="Patil A.A."/>
            <person name="Beveridge R.D."/>
            <person name="Daye C."/>
            <person name="Beniston R."/>
            <person name="Maslen S."/>
            <person name="Ahel I."/>
            <person name="Skehel J.M."/>
            <person name="Collis S.J."/>
        </authorList>
    </citation>
    <scope>FUNCTION</scope>
    <scope>PHOSPHORYLATION AT SER-100 AND SER-115</scope>
    <scope>ASSOCIATION WITH THE MRN COMPLEX</scope>
    <scope>INTERACTION WITH MRE11; NBN AND RAD50</scope>
    <scope>SUBCELLULAR LOCATION</scope>
    <scope>REGION</scope>
    <scope>MUTAGENESIS OF SER-100; SER-115; ARG-141; SER-143; 148-ARG--LYS-151; ARG-154 AND 213-LYS--ARG-237</scope>
</reference>
<keyword id="KW-0025">Alternative splicing</keyword>
<keyword id="KW-0227">DNA damage</keyword>
<keyword id="KW-0234">DNA repair</keyword>
<keyword id="KW-0539">Nucleus</keyword>
<keyword id="KW-0597">Phosphoprotein</keyword>
<keyword id="KW-1267">Proteomics identification</keyword>
<keyword id="KW-1185">Reference proteome</keyword>
<evidence type="ECO:0000256" key="1">
    <source>
        <dbReference type="SAM" id="MobiDB-lite"/>
    </source>
</evidence>
<evidence type="ECO:0000269" key="2">
    <source>
    </source>
</evidence>
<evidence type="ECO:0000269" key="3">
    <source>
    </source>
</evidence>
<evidence type="ECO:0000269" key="4">
    <source ref="4"/>
</evidence>
<evidence type="ECO:0000303" key="5">
    <source>
    </source>
</evidence>
<evidence type="ECO:0000303" key="6">
    <source>
    </source>
</evidence>
<evidence type="ECO:0000303" key="7">
    <source>
    </source>
</evidence>
<evidence type="ECO:0000305" key="8"/>
<evidence type="ECO:0000312" key="9">
    <source>
        <dbReference type="HGNC" id="HGNC:30817"/>
    </source>
</evidence>
<accession>Q6NTE8</accession>
<accession>B5MD09</accession>
<accession>E9PAK6</accession>
<accession>Q7Z3D8</accession>
<accession>Q9BUC1</accession>
<accession>Q9UN54</accession>
<sequence>MASLQRSRVLRCCSCRLFQAHQVKKSVKWTCKACGEKQSFLQAYGEGSGADCRRHVQKLNLLQGQVSELPLRSLEETVSASEEENVGHQQAGNVKQQEKSQPSESRWLKYLEKDSQELELEGTGVCFSKQPSSKMEEPGPRFSQDLPRKRKWSRSTVQPPCSRGVQDSGGSEVAWGPQKGQAGLTWKVKQGSSPCLQENSADCSAGELRGPGKELWSPIQQVTATSSKWAQFVLPPRKSSHVDSEQPRSLQRDPRPAGPAQAKQGTPRAQASREGLSRPTAAVQLPRATHPVTSGSERPCGKTSWDARTPWAEGGPLVLEAQNPRPTRLCDLFITGEDFDDDV</sequence>
<name>MRNIP_HUMAN</name>
<comment type="function">
    <text>Plays a role in the cellular response to DNA damage and the maintenance of genome stability through its association with the MRN damage-sensing complex (PubMed:27568553). Promotes chromatin loading and activity of the MRN complex to facilitate subsequent ATM-mediated DNA damage response signaling and DNA repair (PubMed:27568553).</text>
</comment>
<comment type="subunit">
    <text evidence="3">Associates with the MRE11-RAD50-NBN (MRN) damage-sensing complex; this association is constitutive (PubMed:27568553). Interacts with MRE11 (PubMed:27568553). Interacts with NBN (PubMed:27568553). Interacts with RAD50 (PubMed:27568553).</text>
</comment>
<comment type="interaction">
    <interactant intactId="EBI-2857471">
        <id>Q6NTE8</id>
    </interactant>
    <interactant intactId="EBI-724940">
        <id>Q9BVJ7</id>
        <label>DUSP23</label>
    </interactant>
    <organismsDiffer>false</organismsDiffer>
    <experiments>3</experiments>
</comment>
<comment type="interaction">
    <interactant intactId="EBI-2857471">
        <id>Q6NTE8</id>
    </interactant>
    <interactant intactId="EBI-743105">
        <id>Q5JVL4</id>
        <label>EFHC1</label>
    </interactant>
    <organismsDiffer>false</organismsDiffer>
    <experiments>3</experiments>
</comment>
<comment type="interaction">
    <interactant intactId="EBI-2857471">
        <id>Q6NTE8</id>
    </interactant>
    <interactant intactId="EBI-347740">
        <id>P60228</id>
        <label>EIF3E</label>
    </interactant>
    <organismsDiffer>false</organismsDiffer>
    <experiments>3</experiments>
</comment>
<comment type="interaction">
    <interactant intactId="EBI-2857471">
        <id>Q6NTE8</id>
    </interactant>
    <interactant intactId="EBI-744099">
        <id>Q9H0I2</id>
        <label>ENKD1</label>
    </interactant>
    <organismsDiffer>false</organismsDiffer>
    <experiments>3</experiments>
</comment>
<comment type="interaction">
    <interactant intactId="EBI-2857471">
        <id>Q6NTE8</id>
    </interactant>
    <interactant intactId="EBI-591778">
        <id>P61970</id>
        <label>NUTF2</label>
    </interactant>
    <organismsDiffer>false</organismsDiffer>
    <experiments>3</experiments>
</comment>
<comment type="interaction">
    <interactant intactId="EBI-2857471">
        <id>Q6NTE8</id>
    </interactant>
    <interactant intactId="EBI-398874">
        <id>Q9UBU9</id>
        <label>NXF1</label>
    </interactant>
    <organismsDiffer>false</organismsDiffer>
    <experiments>3</experiments>
</comment>
<comment type="interaction">
    <interactant intactId="EBI-2857471">
        <id>Q6NTE8</id>
    </interactant>
    <interactant intactId="EBI-79165">
        <id>Q9NRD5</id>
        <label>PICK1</label>
    </interactant>
    <organismsDiffer>false</organismsDiffer>
    <experiments>3</experiments>
</comment>
<comment type="interaction">
    <interactant intactId="EBI-2857471">
        <id>Q6NTE8</id>
    </interactant>
    <interactant intactId="EBI-2682139">
        <id>P61925</id>
        <label>PKIA</label>
    </interactant>
    <organismsDiffer>false</organismsDiffer>
    <experiments>3</experiments>
</comment>
<comment type="interaction">
    <interactant intactId="EBI-2857471">
        <id>Q6NTE8</id>
    </interactant>
    <interactant intactId="EBI-372273">
        <id>P20618</id>
        <label>PSMB1</label>
    </interactant>
    <organismsDiffer>false</organismsDiffer>
    <experiments>3</experiments>
</comment>
<comment type="subcellular location">
    <subcellularLocation>
        <location evidence="3">Nucleus</location>
    </subcellularLocation>
    <subcellularLocation>
        <location evidence="3">Nucleus</location>
        <location evidence="3">Nucleoplasm</location>
    </subcellularLocation>
    <text evidence="3">Recruited to sites of DNA damage (PubMed:27568553). Phosphorylation on Ser-115 induces its nuclear localization and promotes genome stability (PubMed:27568553).</text>
</comment>
<comment type="alternative products">
    <event type="alternative splicing"/>
    <isoform>
        <id>Q6NTE8-1</id>
        <name>1</name>
        <sequence type="displayed"/>
    </isoform>
    <isoform>
        <id>Q6NTE8-2</id>
        <name>2</name>
        <sequence type="described" ref="VSP_032560 VSP_032561 VSP_032562"/>
    </isoform>
    <isoform>
        <id>Q6NTE8-3</id>
        <name>3</name>
        <sequence type="described" ref="VSP_047227"/>
    </isoform>
</comment>
<comment type="PTM">
    <text evidence="3">Phosphorylated; phosphorylation is constitutive and occurs in the absence of any DNA-damaging stimulus. Phosphorylation on Ser-115 is necessary for its nuclear retention.</text>
</comment>
<comment type="similarity">
    <text evidence="8">Belongs to the MRNIP family.</text>
</comment>
<comment type="sequence caution" evidence="8">
    <conflict type="frameshift">
        <sequence resource="EMBL-CDS" id="AAD51611"/>
    </conflict>
</comment>
<comment type="sequence caution" evidence="8">
    <conflict type="erroneous initiation">
        <sequence resource="EMBL-CDS" id="CAD97932"/>
    </conflict>
    <text>Extended N-terminus.</text>
</comment>
<proteinExistence type="evidence at protein level"/>
<feature type="chain" id="PRO_0000326119" description="MRN complex-interacting protein">
    <location>
        <begin position="1"/>
        <end position="343"/>
    </location>
</feature>
<feature type="region of interest" description="Disordered" evidence="1">
    <location>
        <begin position="75"/>
        <end position="104"/>
    </location>
</feature>
<feature type="region of interest" description="Disordered" evidence="1">
    <location>
        <begin position="128"/>
        <end position="178"/>
    </location>
</feature>
<feature type="region of interest" description="Disordered" evidence="1">
    <location>
        <begin position="193"/>
        <end position="212"/>
    </location>
</feature>
<feature type="region of interest" description="Necessary for the association with the MRN complex" evidence="3">
    <location>
        <begin position="213"/>
        <end position="237"/>
    </location>
</feature>
<feature type="region of interest" description="Disordered" evidence="1">
    <location>
        <begin position="230"/>
        <end position="324"/>
    </location>
</feature>
<feature type="short sequence motif" description="Nuclear localization signal (NLS)" evidence="3">
    <location>
        <begin position="148"/>
        <end position="151"/>
    </location>
</feature>
<feature type="compositionally biased region" description="Polar residues" evidence="1">
    <location>
        <begin position="87"/>
        <end position="104"/>
    </location>
</feature>
<feature type="compositionally biased region" description="Polar residues" evidence="1">
    <location>
        <begin position="193"/>
        <end position="202"/>
    </location>
</feature>
<feature type="compositionally biased region" description="Basic and acidic residues" evidence="1">
    <location>
        <begin position="240"/>
        <end position="255"/>
    </location>
</feature>
<feature type="modified residue" description="Phosphoserine" evidence="3">
    <location>
        <position position="100"/>
    </location>
</feature>
<feature type="modified residue" description="Phosphoserine" evidence="3">
    <location>
        <position position="115"/>
    </location>
</feature>
<feature type="splice variant" id="VSP_032560" description="In isoform 2." evidence="6">
    <original>MASLQRSRVLRCCSCRLFQAHQVKKSVKWTCKACGEKQSFLQ</original>
    <variation>MQSARAWLPGDCTSRDGVASAFSGATLLQLPPLPGAPGKKECQVDMQSLWREAVLFAEFPRHGAPASELPVPSGSEMDGAESGK</variation>
    <location>
        <begin position="1"/>
        <end position="42"/>
    </location>
</feature>
<feature type="splice variant" id="VSP_047227" description="In isoform 3." evidence="5">
    <location>
        <begin position="43"/>
        <end position="97"/>
    </location>
</feature>
<feature type="splice variant" id="VSP_032561" description="In isoform 2." evidence="6">
    <original>VTATSSKW</original>
    <variation>DGYKEILF</variation>
    <location>
        <begin position="222"/>
        <end position="229"/>
    </location>
</feature>
<feature type="splice variant" id="VSP_032562" description="In isoform 2." evidence="6">
    <location>
        <begin position="230"/>
        <end position="343"/>
    </location>
</feature>
<feature type="sequence variant" id="VAR_054030" description="In dbSNP:rs1650893.">
    <original>Q</original>
    <variation>R</variation>
    <location>
        <position position="42"/>
    </location>
</feature>
<feature type="sequence variant" id="VAR_039990" description="In dbSNP:rs1650893.">
    <original>Q</original>
    <variation>R</variation>
    <location>
        <position position="97"/>
    </location>
</feature>
<feature type="sequence variant" id="VAR_039991" description="In dbSNP:rs248248." evidence="2">
    <original>R</original>
    <variation>G</variation>
    <location>
        <position position="154"/>
    </location>
</feature>
<feature type="sequence variant" id="VAR_039992" description="In dbSNP:rs10277." evidence="2 4">
    <original>Q</original>
    <variation>R</variation>
    <location>
        <position position="231"/>
    </location>
</feature>
<feature type="mutagenesis site" description="Does not affect nuclear localization. Decreases weakly the association with the MRN complex. Reduces phosphorylation; when associated with A-115 and A-143." evidence="3">
    <original>S</original>
    <variation>A</variation>
    <location>
        <position position="100"/>
    </location>
</feature>
<feature type="mutagenesis site" description="Reduces nuclear localization and increases DNA damage accumulation. Decreases weakly the association with the MRN complex. Reduces phosphorylation; when associated with A-100 and A-143." evidence="3">
    <original>S</original>
    <variation>A</variation>
    <location>
        <position position="115"/>
    </location>
</feature>
<feature type="mutagenesis site" description="Does not affect nuclear localization." evidence="3">
    <original>S</original>
    <variation>D</variation>
    <location>
        <position position="115"/>
    </location>
</feature>
<feature type="mutagenesis site" description="Reduces nuclear localization and increases DNA damage accumulation and does not affect the association with the MRN complex; when associated with 148-A--A-151 and A-154." evidence="3">
    <original>R</original>
    <variation>A</variation>
    <location>
        <position position="141"/>
    </location>
</feature>
<feature type="mutagenesis site" description="Reduces phosphorylation; when associated with A-100 and A-115." evidence="3">
    <original>S</original>
    <variation>A</variation>
    <location>
        <position position="143"/>
    </location>
</feature>
<feature type="mutagenesis site" description="Decreases nuclear localization. Reduces nuclear localization and increases DNA damage accumulation and does not affect the association with the MRN complex; when associated with A-141 and A-154." evidence="3">
    <original>RKRK</original>
    <variation>AAAA</variation>
    <location>
        <begin position="148"/>
        <end position="151"/>
    </location>
</feature>
<feature type="mutagenesis site" description="Reduces nuclear localization and increases DNA damage accumulation and does not affect the association with the MRN complex; when associated with A-141 and 148-A--A-151." evidence="3">
    <original>R</original>
    <variation>A</variation>
    <location>
        <position position="154"/>
    </location>
</feature>
<feature type="mutagenesis site" description="Reduces the association with the MRN complex." evidence="3">
    <location>
        <begin position="213"/>
        <end position="237"/>
    </location>
</feature>
<feature type="sequence conflict" description="In Ref. 3; BC050714." evidence="8" ref="3">
    <original>Q</original>
    <variation>R</variation>
    <location sequence="Q6NTE8-3">
        <position position="42"/>
    </location>
</feature>
<organism>
    <name type="scientific">Homo sapiens</name>
    <name type="common">Human</name>
    <dbReference type="NCBI Taxonomy" id="9606"/>
    <lineage>
        <taxon>Eukaryota</taxon>
        <taxon>Metazoa</taxon>
        <taxon>Chordata</taxon>
        <taxon>Craniata</taxon>
        <taxon>Vertebrata</taxon>
        <taxon>Euteleostomi</taxon>
        <taxon>Mammalia</taxon>
        <taxon>Eutheria</taxon>
        <taxon>Euarchontoglires</taxon>
        <taxon>Primates</taxon>
        <taxon>Haplorrhini</taxon>
        <taxon>Catarrhini</taxon>
        <taxon>Hominidae</taxon>
        <taxon>Homo</taxon>
    </lineage>
</organism>